<keyword id="KW-0067">ATP-binding</keyword>
<keyword id="KW-0963">Cytoplasm</keyword>
<keyword id="KW-0418">Kinase</keyword>
<keyword id="KW-0547">Nucleotide-binding</keyword>
<keyword id="KW-1185">Reference proteome</keyword>
<keyword id="KW-0808">Transferase</keyword>
<dbReference type="EC" id="2.7.4.25" evidence="1"/>
<dbReference type="EMBL" id="AP006878">
    <property type="protein sequence ID" value="BAD85703.1"/>
    <property type="molecule type" value="Genomic_DNA"/>
</dbReference>
<dbReference type="RefSeq" id="WP_011250465.1">
    <property type="nucleotide sequence ID" value="NC_006624.1"/>
</dbReference>
<dbReference type="SMR" id="Q5JJE3"/>
<dbReference type="FunCoup" id="Q5JJE3">
    <property type="interactions" value="18"/>
</dbReference>
<dbReference type="IntAct" id="Q5JJE3">
    <property type="interactions" value="1"/>
</dbReference>
<dbReference type="MINT" id="Q5JJE3"/>
<dbReference type="STRING" id="69014.TK1514"/>
<dbReference type="EnsemblBacteria" id="BAD85703">
    <property type="protein sequence ID" value="BAD85703"/>
    <property type="gene ID" value="TK1514"/>
</dbReference>
<dbReference type="GeneID" id="78448042"/>
<dbReference type="KEGG" id="tko:TK1514"/>
<dbReference type="PATRIC" id="fig|69014.16.peg.1474"/>
<dbReference type="eggNOG" id="arCOG01037">
    <property type="taxonomic scope" value="Archaea"/>
</dbReference>
<dbReference type="HOGENOM" id="CLU_079959_1_0_2"/>
<dbReference type="InParanoid" id="Q5JJE3"/>
<dbReference type="OrthoDB" id="31096at2157"/>
<dbReference type="PhylomeDB" id="Q5JJE3"/>
<dbReference type="Proteomes" id="UP000000536">
    <property type="component" value="Chromosome"/>
</dbReference>
<dbReference type="GO" id="GO:0005737">
    <property type="term" value="C:cytoplasm"/>
    <property type="evidence" value="ECO:0007669"/>
    <property type="project" value="UniProtKB-SubCell"/>
</dbReference>
<dbReference type="GO" id="GO:0005524">
    <property type="term" value="F:ATP binding"/>
    <property type="evidence" value="ECO:0007669"/>
    <property type="project" value="UniProtKB-UniRule"/>
</dbReference>
<dbReference type="GO" id="GO:0036430">
    <property type="term" value="F:CMP kinase activity"/>
    <property type="evidence" value="ECO:0007669"/>
    <property type="project" value="RHEA"/>
</dbReference>
<dbReference type="GO" id="GO:0036431">
    <property type="term" value="F:dCMP kinase activity"/>
    <property type="evidence" value="ECO:0007669"/>
    <property type="project" value="RHEA"/>
</dbReference>
<dbReference type="GO" id="GO:0006220">
    <property type="term" value="P:pyrimidine nucleotide metabolic process"/>
    <property type="evidence" value="ECO:0007669"/>
    <property type="project" value="UniProtKB-UniRule"/>
</dbReference>
<dbReference type="CDD" id="cd02020">
    <property type="entry name" value="CMPK"/>
    <property type="match status" value="1"/>
</dbReference>
<dbReference type="Gene3D" id="3.40.50.300">
    <property type="entry name" value="P-loop containing nucleotide triphosphate hydrolases"/>
    <property type="match status" value="1"/>
</dbReference>
<dbReference type="HAMAP" id="MF_00239">
    <property type="entry name" value="Cytidyl_kinase_type2"/>
    <property type="match status" value="1"/>
</dbReference>
<dbReference type="InterPro" id="IPR011892">
    <property type="entry name" value="Cyt_kin_arch"/>
</dbReference>
<dbReference type="InterPro" id="IPR011994">
    <property type="entry name" value="Cytidylate_kinase_dom"/>
</dbReference>
<dbReference type="InterPro" id="IPR027417">
    <property type="entry name" value="P-loop_NTPase"/>
</dbReference>
<dbReference type="NCBIfam" id="TIGR02173">
    <property type="entry name" value="cyt_kin_arch"/>
    <property type="match status" value="1"/>
</dbReference>
<dbReference type="Pfam" id="PF13189">
    <property type="entry name" value="Cytidylate_kin2"/>
    <property type="match status" value="1"/>
</dbReference>
<dbReference type="SUPFAM" id="SSF52540">
    <property type="entry name" value="P-loop containing nucleoside triphosphate hydrolases"/>
    <property type="match status" value="1"/>
</dbReference>
<accession>Q5JJE3</accession>
<feature type="chain" id="PRO_0000132022" description="Cytidylate kinase">
    <location>
        <begin position="1"/>
        <end position="193"/>
    </location>
</feature>
<feature type="binding site" evidence="1">
    <location>
        <begin position="12"/>
        <end position="20"/>
    </location>
    <ligand>
        <name>ATP</name>
        <dbReference type="ChEBI" id="CHEBI:30616"/>
    </ligand>
</feature>
<protein>
    <recommendedName>
        <fullName evidence="1">Cytidylate kinase</fullName>
        <shortName evidence="1">CK</shortName>
        <ecNumber evidence="1">2.7.4.25</ecNumber>
    </recommendedName>
    <alternativeName>
        <fullName evidence="1">Cytidine monophosphate kinase</fullName>
        <shortName evidence="1">CMP kinase</shortName>
    </alternativeName>
</protein>
<gene>
    <name evidence="1" type="primary">cmk</name>
    <name type="ordered locus">TK1514</name>
</gene>
<proteinExistence type="inferred from homology"/>
<reference key="1">
    <citation type="journal article" date="2005" name="Genome Res.">
        <title>Complete genome sequence of the hyperthermophilic archaeon Thermococcus kodakaraensis KOD1 and comparison with Pyrococcus genomes.</title>
        <authorList>
            <person name="Fukui T."/>
            <person name="Atomi H."/>
            <person name="Kanai T."/>
            <person name="Matsumi R."/>
            <person name="Fujiwara S."/>
            <person name="Imanaka T."/>
        </authorList>
    </citation>
    <scope>NUCLEOTIDE SEQUENCE [LARGE SCALE GENOMIC DNA]</scope>
    <source>
        <strain>ATCC BAA-918 / JCM 12380 / KOD1</strain>
    </source>
</reference>
<organism>
    <name type="scientific">Thermococcus kodakarensis (strain ATCC BAA-918 / JCM 12380 / KOD1)</name>
    <name type="common">Pyrococcus kodakaraensis (strain KOD1)</name>
    <dbReference type="NCBI Taxonomy" id="69014"/>
    <lineage>
        <taxon>Archaea</taxon>
        <taxon>Methanobacteriati</taxon>
        <taxon>Methanobacteriota</taxon>
        <taxon>Thermococci</taxon>
        <taxon>Thermococcales</taxon>
        <taxon>Thermococcaceae</taxon>
        <taxon>Thermococcus</taxon>
    </lineage>
</organism>
<comment type="catalytic activity">
    <reaction evidence="1">
        <text>CMP + ATP = CDP + ADP</text>
        <dbReference type="Rhea" id="RHEA:11600"/>
        <dbReference type="ChEBI" id="CHEBI:30616"/>
        <dbReference type="ChEBI" id="CHEBI:58069"/>
        <dbReference type="ChEBI" id="CHEBI:60377"/>
        <dbReference type="ChEBI" id="CHEBI:456216"/>
        <dbReference type="EC" id="2.7.4.25"/>
    </reaction>
</comment>
<comment type="catalytic activity">
    <reaction evidence="1">
        <text>dCMP + ATP = dCDP + ADP</text>
        <dbReference type="Rhea" id="RHEA:25094"/>
        <dbReference type="ChEBI" id="CHEBI:30616"/>
        <dbReference type="ChEBI" id="CHEBI:57566"/>
        <dbReference type="ChEBI" id="CHEBI:58593"/>
        <dbReference type="ChEBI" id="CHEBI:456216"/>
        <dbReference type="EC" id="2.7.4.25"/>
    </reaction>
</comment>
<comment type="subcellular location">
    <subcellularLocation>
        <location evidence="1">Cytoplasm</location>
    </subcellularLocation>
</comment>
<comment type="similarity">
    <text evidence="1">Belongs to the cytidylate kinase family. Type 2 subfamily.</text>
</comment>
<evidence type="ECO:0000255" key="1">
    <source>
        <dbReference type="HAMAP-Rule" id="MF_00239"/>
    </source>
</evidence>
<sequence>MPKGCLVITVSGLAGSGTTTLCRNLAKHYGFKHIYAGLIFRQMAKEMGMTLEEFQKYVELHPEIDREIDRRQIEAAKECNVVIEGRLAGWMVKNADLKIWLDAPIMERAKRVAKREGISVEEAFVKIAEREKQNRKRYLNLYGIDIEDKSIYDLIINTAHWGPDGVFAIVKAAIDHLSPSGDAGEDEKEKEVG</sequence>
<name>KCY_THEKO</name>